<reference key="1">
    <citation type="journal article" date="2001" name="Proc. Natl. Acad. Sci. U.S.A.">
        <title>Complete genome sequence of an M1 strain of Streptococcus pyogenes.</title>
        <authorList>
            <person name="Ferretti J.J."/>
            <person name="McShan W.M."/>
            <person name="Ajdic D.J."/>
            <person name="Savic D.J."/>
            <person name="Savic G."/>
            <person name="Lyon K."/>
            <person name="Primeaux C."/>
            <person name="Sezate S."/>
            <person name="Suvorov A.N."/>
            <person name="Kenton S."/>
            <person name="Lai H.S."/>
            <person name="Lin S.P."/>
            <person name="Qian Y."/>
            <person name="Jia H.G."/>
            <person name="Najar F.Z."/>
            <person name="Ren Q."/>
            <person name="Zhu H."/>
            <person name="Song L."/>
            <person name="White J."/>
            <person name="Yuan X."/>
            <person name="Clifton S.W."/>
            <person name="Roe B.A."/>
            <person name="McLaughlin R.E."/>
        </authorList>
    </citation>
    <scope>NUCLEOTIDE SEQUENCE [LARGE SCALE GENOMIC DNA]</scope>
    <source>
        <strain>ATCC 700294 / SF370 / Serotype M1</strain>
    </source>
</reference>
<reference key="2">
    <citation type="journal article" date="2005" name="J. Infect. Dis.">
        <title>Evolutionary origin and emergence of a highly successful clone of serotype M1 group A Streptococcus involved multiple horizontal gene transfer events.</title>
        <authorList>
            <person name="Sumby P."/>
            <person name="Porcella S.F."/>
            <person name="Madrigal A.G."/>
            <person name="Barbian K.D."/>
            <person name="Virtaneva K."/>
            <person name="Ricklefs S.M."/>
            <person name="Sturdevant D.E."/>
            <person name="Graham M.R."/>
            <person name="Vuopio-Varkila J."/>
            <person name="Hoe N.P."/>
            <person name="Musser J.M."/>
        </authorList>
    </citation>
    <scope>NUCLEOTIDE SEQUENCE [LARGE SCALE GENOMIC DNA]</scope>
    <source>
        <strain>ATCC BAA-947 / MGAS5005 / Serotype M1</strain>
    </source>
</reference>
<proteinExistence type="inferred from homology"/>
<organism>
    <name type="scientific">Streptococcus pyogenes serotype M1</name>
    <dbReference type="NCBI Taxonomy" id="301447"/>
    <lineage>
        <taxon>Bacteria</taxon>
        <taxon>Bacillati</taxon>
        <taxon>Bacillota</taxon>
        <taxon>Bacilli</taxon>
        <taxon>Lactobacillales</taxon>
        <taxon>Streptococcaceae</taxon>
        <taxon>Streptococcus</taxon>
    </lineage>
</organism>
<feature type="chain" id="PRO_1000068161" description="Large ribosomal subunit protein uL23">
    <location>
        <begin position="1"/>
        <end position="98"/>
    </location>
</feature>
<evidence type="ECO:0000255" key="1">
    <source>
        <dbReference type="HAMAP-Rule" id="MF_01369"/>
    </source>
</evidence>
<evidence type="ECO:0000305" key="2"/>
<gene>
    <name evidence="1" type="primary">rplW</name>
    <name type="ordered locus">SPy_0051</name>
    <name type="ordered locus">M5005_Spy0046</name>
</gene>
<dbReference type="EMBL" id="AE004092">
    <property type="protein sequence ID" value="AAK33184.1"/>
    <property type="molecule type" value="Genomic_DNA"/>
</dbReference>
<dbReference type="EMBL" id="CP000017">
    <property type="protein sequence ID" value="AAZ50665.1"/>
    <property type="molecule type" value="Genomic_DNA"/>
</dbReference>
<dbReference type="RefSeq" id="NP_268462.1">
    <property type="nucleotide sequence ID" value="NC_002737.2"/>
</dbReference>
<dbReference type="SMR" id="Q9A1X2"/>
<dbReference type="PaxDb" id="1314-HKU360_00079"/>
<dbReference type="KEGG" id="spy:SPy_0051"/>
<dbReference type="KEGG" id="spz:M5005_Spy0046"/>
<dbReference type="PATRIC" id="fig|160490.10.peg.46"/>
<dbReference type="HOGENOM" id="CLU_037562_3_2_9"/>
<dbReference type="OMA" id="DHRAAKP"/>
<dbReference type="PRO" id="PR:Q9A1X2"/>
<dbReference type="Proteomes" id="UP000000750">
    <property type="component" value="Chromosome"/>
</dbReference>
<dbReference type="GO" id="GO:1990904">
    <property type="term" value="C:ribonucleoprotein complex"/>
    <property type="evidence" value="ECO:0007669"/>
    <property type="project" value="UniProtKB-KW"/>
</dbReference>
<dbReference type="GO" id="GO:0005840">
    <property type="term" value="C:ribosome"/>
    <property type="evidence" value="ECO:0007669"/>
    <property type="project" value="UniProtKB-KW"/>
</dbReference>
<dbReference type="GO" id="GO:0019843">
    <property type="term" value="F:rRNA binding"/>
    <property type="evidence" value="ECO:0007669"/>
    <property type="project" value="UniProtKB-UniRule"/>
</dbReference>
<dbReference type="GO" id="GO:0003735">
    <property type="term" value="F:structural constituent of ribosome"/>
    <property type="evidence" value="ECO:0007669"/>
    <property type="project" value="InterPro"/>
</dbReference>
<dbReference type="GO" id="GO:0006412">
    <property type="term" value="P:translation"/>
    <property type="evidence" value="ECO:0007669"/>
    <property type="project" value="UniProtKB-UniRule"/>
</dbReference>
<dbReference type="FunFam" id="3.30.70.330:FF:000001">
    <property type="entry name" value="50S ribosomal protein L23"/>
    <property type="match status" value="1"/>
</dbReference>
<dbReference type="Gene3D" id="3.30.70.330">
    <property type="match status" value="1"/>
</dbReference>
<dbReference type="HAMAP" id="MF_01369_B">
    <property type="entry name" value="Ribosomal_uL23_B"/>
    <property type="match status" value="1"/>
</dbReference>
<dbReference type="InterPro" id="IPR012677">
    <property type="entry name" value="Nucleotide-bd_a/b_plait_sf"/>
</dbReference>
<dbReference type="InterPro" id="IPR013025">
    <property type="entry name" value="Ribosomal_uL23-like"/>
</dbReference>
<dbReference type="InterPro" id="IPR012678">
    <property type="entry name" value="Ribosomal_uL23/eL15/eS24_sf"/>
</dbReference>
<dbReference type="InterPro" id="IPR001014">
    <property type="entry name" value="Ribosomal_uL23_CS"/>
</dbReference>
<dbReference type="NCBIfam" id="NF004361">
    <property type="entry name" value="PRK05738.2-1"/>
    <property type="match status" value="1"/>
</dbReference>
<dbReference type="NCBIfam" id="NF004363">
    <property type="entry name" value="PRK05738.2-4"/>
    <property type="match status" value="1"/>
</dbReference>
<dbReference type="PANTHER" id="PTHR11620">
    <property type="entry name" value="60S RIBOSOMAL PROTEIN L23A"/>
    <property type="match status" value="1"/>
</dbReference>
<dbReference type="Pfam" id="PF00276">
    <property type="entry name" value="Ribosomal_L23"/>
    <property type="match status" value="1"/>
</dbReference>
<dbReference type="SUPFAM" id="SSF54189">
    <property type="entry name" value="Ribosomal proteins S24e, L23 and L15e"/>
    <property type="match status" value="1"/>
</dbReference>
<dbReference type="PROSITE" id="PS00050">
    <property type="entry name" value="RIBOSOMAL_L23"/>
    <property type="match status" value="1"/>
</dbReference>
<comment type="function">
    <text evidence="1">One of the early assembly proteins it binds 23S rRNA. One of the proteins that surrounds the polypeptide exit tunnel on the outside of the ribosome. Forms the main docking site for trigger factor binding to the ribosome.</text>
</comment>
<comment type="subunit">
    <text evidence="1">Part of the 50S ribosomal subunit. Contacts protein L29, and trigger factor when it is bound to the ribosome.</text>
</comment>
<comment type="similarity">
    <text evidence="1">Belongs to the universal ribosomal protein uL23 family.</text>
</comment>
<name>RL23_STRP1</name>
<accession>Q9A1X2</accession>
<accession>Q491Q3</accession>
<sequence>MNLYDVIKKPVITEKSMIALEAGKYTFEVDTRAHKLLIKQAVEAAFDGVKVASVNTVNVKPKAKRVGRYTGFTSKTKKAIITLTADSKAIELFAAEAE</sequence>
<keyword id="KW-1185">Reference proteome</keyword>
<keyword id="KW-0687">Ribonucleoprotein</keyword>
<keyword id="KW-0689">Ribosomal protein</keyword>
<keyword id="KW-0694">RNA-binding</keyword>
<keyword id="KW-0699">rRNA-binding</keyword>
<protein>
    <recommendedName>
        <fullName evidence="1">Large ribosomal subunit protein uL23</fullName>
    </recommendedName>
    <alternativeName>
        <fullName evidence="2">50S ribosomal protein L23</fullName>
    </alternativeName>
</protein>